<proteinExistence type="inferred from homology"/>
<name>KDTX_SERMA</name>
<protein>
    <recommendedName>
        <fullName>Lipopolysaccharide core biosynthesis glycosyltransferase KdtX</fullName>
        <ecNumber>2.4.-.-</ecNumber>
    </recommendedName>
</protein>
<gene>
    <name type="primary">kdtX</name>
</gene>
<feature type="chain" id="PRO_0000059220" description="Lipopolysaccharide core biosynthesis glycosyltransferase KdtX">
    <location>
        <begin position="1"/>
        <end position="257"/>
    </location>
</feature>
<sequence>MSSRKSLSVVMIAKNEAGLLPDCLRSVAWADEIIVLDSGSEDDSVAVAESLGAKVFTHTDWQGFGKQRQLAQSYASHDYVLMIDADERVTPELRQSIERVLNAPDDGAVYSCARRNLFLGRFMRHSGWYPDRVNRLYANSRYRYNDDLVHELLNIGDAKVIPLSGDMLHLTCRDFFAFQRKQLRYAEEWATQRHRAGKRCGYLSILTHTLGAFVKTWLLRAGFLDGKQGLLLAVVNAQYTFNKYAALWALGRNYSEK</sequence>
<organism>
    <name type="scientific">Serratia marcescens</name>
    <dbReference type="NCBI Taxonomy" id="615"/>
    <lineage>
        <taxon>Bacteria</taxon>
        <taxon>Pseudomonadati</taxon>
        <taxon>Pseudomonadota</taxon>
        <taxon>Gammaproteobacteria</taxon>
        <taxon>Enterobacterales</taxon>
        <taxon>Yersiniaceae</taxon>
        <taxon>Serratia</taxon>
    </lineage>
</organism>
<reference key="1">
    <citation type="journal article" date="1996" name="J. Bacteriol.">
        <title>Cloning and characterization of two Serratia marcescens genes involved in core lipopolysaccharide biosynthesis.</title>
        <authorList>
            <person name="Guasch J.F."/>
            <person name="Pique N."/>
            <person name="Climent N."/>
            <person name="Ferrer S."/>
            <person name="Merino S."/>
            <person name="Rubires X."/>
            <person name="Tomas J.M."/>
            <person name="Regue M."/>
        </authorList>
    </citation>
    <scope>NUCLEOTIDE SEQUENCE [GENOMIC DNA]</scope>
    <source>
        <strain>N28b</strain>
    </source>
</reference>
<dbReference type="EC" id="2.4.-.-"/>
<dbReference type="EMBL" id="U52844">
    <property type="protein sequence ID" value="AAC44433.1"/>
    <property type="molecule type" value="Genomic_DNA"/>
</dbReference>
<dbReference type="SMR" id="Q54435"/>
<dbReference type="STRING" id="273526.SMDB11_4062"/>
<dbReference type="CAZy" id="GT2">
    <property type="family name" value="Glycosyltransferase Family 2"/>
</dbReference>
<dbReference type="UniPathway" id="UPA00958"/>
<dbReference type="GO" id="GO:0016757">
    <property type="term" value="F:glycosyltransferase activity"/>
    <property type="evidence" value="ECO:0007669"/>
    <property type="project" value="UniProtKB-KW"/>
</dbReference>
<dbReference type="GO" id="GO:0009244">
    <property type="term" value="P:lipopolysaccharide core region biosynthetic process"/>
    <property type="evidence" value="ECO:0007669"/>
    <property type="project" value="UniProtKB-UniPathway"/>
</dbReference>
<dbReference type="CDD" id="cd02511">
    <property type="entry name" value="Beta4Glucosyltransferase"/>
    <property type="match status" value="1"/>
</dbReference>
<dbReference type="Gene3D" id="3.90.550.10">
    <property type="entry name" value="Spore Coat Polysaccharide Biosynthesis Protein SpsA, Chain A"/>
    <property type="match status" value="1"/>
</dbReference>
<dbReference type="InterPro" id="IPR001173">
    <property type="entry name" value="Glyco_trans_2-like"/>
</dbReference>
<dbReference type="InterPro" id="IPR029044">
    <property type="entry name" value="Nucleotide-diphossugar_trans"/>
</dbReference>
<dbReference type="PANTHER" id="PTHR43630:SF2">
    <property type="entry name" value="GLYCOSYLTRANSFERASE"/>
    <property type="match status" value="1"/>
</dbReference>
<dbReference type="PANTHER" id="PTHR43630">
    <property type="entry name" value="POLY-BETA-1,6-N-ACETYL-D-GLUCOSAMINE SYNTHASE"/>
    <property type="match status" value="1"/>
</dbReference>
<dbReference type="Pfam" id="PF00535">
    <property type="entry name" value="Glycos_transf_2"/>
    <property type="match status" value="1"/>
</dbReference>
<dbReference type="SUPFAM" id="SSF53448">
    <property type="entry name" value="Nucleotide-diphospho-sugar transferases"/>
    <property type="match status" value="1"/>
</dbReference>
<keyword id="KW-0328">Glycosyltransferase</keyword>
<keyword id="KW-0448">Lipopolysaccharide biosynthesis</keyword>
<keyword id="KW-0808">Transferase</keyword>
<accession>Q54435</accession>
<evidence type="ECO:0000305" key="1"/>
<comment type="pathway">
    <text>Bacterial outer membrane biogenesis; LPS core biosynthesis.</text>
</comment>
<comment type="similarity">
    <text evidence="1">Belongs to the glycosyltransferase 2 family. WaaE/KdtX subfamily.</text>
</comment>